<accession>A9M378</accession>
<organism>
    <name type="scientific">Neisseria meningitidis serogroup C (strain 053442)</name>
    <dbReference type="NCBI Taxonomy" id="374833"/>
    <lineage>
        <taxon>Bacteria</taxon>
        <taxon>Pseudomonadati</taxon>
        <taxon>Pseudomonadota</taxon>
        <taxon>Betaproteobacteria</taxon>
        <taxon>Neisseriales</taxon>
        <taxon>Neisseriaceae</taxon>
        <taxon>Neisseria</taxon>
    </lineage>
</organism>
<feature type="chain" id="PRO_1000080081" description="Large ribosomal subunit protein bL20">
    <location>
        <begin position="1"/>
        <end position="119"/>
    </location>
</feature>
<evidence type="ECO:0000255" key="1">
    <source>
        <dbReference type="HAMAP-Rule" id="MF_00382"/>
    </source>
</evidence>
<evidence type="ECO:0000305" key="2"/>
<proteinExistence type="inferred from homology"/>
<reference key="1">
    <citation type="journal article" date="2008" name="Genomics">
        <title>Characterization of ST-4821 complex, a unique Neisseria meningitidis clone.</title>
        <authorList>
            <person name="Peng J."/>
            <person name="Yang L."/>
            <person name="Yang F."/>
            <person name="Yang J."/>
            <person name="Yan Y."/>
            <person name="Nie H."/>
            <person name="Zhang X."/>
            <person name="Xiong Z."/>
            <person name="Jiang Y."/>
            <person name="Cheng F."/>
            <person name="Xu X."/>
            <person name="Chen S."/>
            <person name="Sun L."/>
            <person name="Li W."/>
            <person name="Shen Y."/>
            <person name="Shao Z."/>
            <person name="Liang X."/>
            <person name="Xu J."/>
            <person name="Jin Q."/>
        </authorList>
    </citation>
    <scope>NUCLEOTIDE SEQUENCE [LARGE SCALE GENOMIC DNA]</scope>
    <source>
        <strain>053442</strain>
    </source>
</reference>
<protein>
    <recommendedName>
        <fullName evidence="1">Large ribosomal subunit protein bL20</fullName>
    </recommendedName>
    <alternativeName>
        <fullName evidence="2">50S ribosomal protein L20</fullName>
    </alternativeName>
</protein>
<gene>
    <name evidence="1" type="primary">rplT</name>
    <name type="ordered locus">NMCC_0683</name>
</gene>
<name>RL20_NEIM0</name>
<dbReference type="EMBL" id="CP000381">
    <property type="protein sequence ID" value="ABX72878.1"/>
    <property type="molecule type" value="Genomic_DNA"/>
</dbReference>
<dbReference type="RefSeq" id="WP_002214103.1">
    <property type="nucleotide sequence ID" value="NC_010120.1"/>
</dbReference>
<dbReference type="SMR" id="A9M378"/>
<dbReference type="GeneID" id="93386451"/>
<dbReference type="KEGG" id="nmn:NMCC_0683"/>
<dbReference type="HOGENOM" id="CLU_123265_0_1_4"/>
<dbReference type="Proteomes" id="UP000001177">
    <property type="component" value="Chromosome"/>
</dbReference>
<dbReference type="GO" id="GO:1990904">
    <property type="term" value="C:ribonucleoprotein complex"/>
    <property type="evidence" value="ECO:0007669"/>
    <property type="project" value="UniProtKB-KW"/>
</dbReference>
<dbReference type="GO" id="GO:0005840">
    <property type="term" value="C:ribosome"/>
    <property type="evidence" value="ECO:0007669"/>
    <property type="project" value="UniProtKB-KW"/>
</dbReference>
<dbReference type="GO" id="GO:0019843">
    <property type="term" value="F:rRNA binding"/>
    <property type="evidence" value="ECO:0007669"/>
    <property type="project" value="UniProtKB-UniRule"/>
</dbReference>
<dbReference type="GO" id="GO:0003735">
    <property type="term" value="F:structural constituent of ribosome"/>
    <property type="evidence" value="ECO:0007669"/>
    <property type="project" value="InterPro"/>
</dbReference>
<dbReference type="GO" id="GO:0000027">
    <property type="term" value="P:ribosomal large subunit assembly"/>
    <property type="evidence" value="ECO:0007669"/>
    <property type="project" value="UniProtKB-UniRule"/>
</dbReference>
<dbReference type="GO" id="GO:0006412">
    <property type="term" value="P:translation"/>
    <property type="evidence" value="ECO:0007669"/>
    <property type="project" value="InterPro"/>
</dbReference>
<dbReference type="CDD" id="cd07026">
    <property type="entry name" value="Ribosomal_L20"/>
    <property type="match status" value="1"/>
</dbReference>
<dbReference type="FunFam" id="1.10.1900.20:FF:000001">
    <property type="entry name" value="50S ribosomal protein L20"/>
    <property type="match status" value="1"/>
</dbReference>
<dbReference type="Gene3D" id="6.10.160.10">
    <property type="match status" value="1"/>
</dbReference>
<dbReference type="Gene3D" id="1.10.1900.20">
    <property type="entry name" value="Ribosomal protein L20"/>
    <property type="match status" value="1"/>
</dbReference>
<dbReference type="HAMAP" id="MF_00382">
    <property type="entry name" value="Ribosomal_bL20"/>
    <property type="match status" value="1"/>
</dbReference>
<dbReference type="InterPro" id="IPR005813">
    <property type="entry name" value="Ribosomal_bL20"/>
</dbReference>
<dbReference type="InterPro" id="IPR049946">
    <property type="entry name" value="RIBOSOMAL_L20_CS"/>
</dbReference>
<dbReference type="InterPro" id="IPR035566">
    <property type="entry name" value="Ribosomal_protein_bL20_C"/>
</dbReference>
<dbReference type="NCBIfam" id="TIGR01032">
    <property type="entry name" value="rplT_bact"/>
    <property type="match status" value="1"/>
</dbReference>
<dbReference type="PANTHER" id="PTHR10986">
    <property type="entry name" value="39S RIBOSOMAL PROTEIN L20"/>
    <property type="match status" value="1"/>
</dbReference>
<dbReference type="Pfam" id="PF00453">
    <property type="entry name" value="Ribosomal_L20"/>
    <property type="match status" value="1"/>
</dbReference>
<dbReference type="PRINTS" id="PR00062">
    <property type="entry name" value="RIBOSOMALL20"/>
</dbReference>
<dbReference type="SUPFAM" id="SSF74731">
    <property type="entry name" value="Ribosomal protein L20"/>
    <property type="match status" value="1"/>
</dbReference>
<dbReference type="PROSITE" id="PS00937">
    <property type="entry name" value="RIBOSOMAL_L20"/>
    <property type="match status" value="1"/>
</dbReference>
<keyword id="KW-0687">Ribonucleoprotein</keyword>
<keyword id="KW-0689">Ribosomal protein</keyword>
<keyword id="KW-0694">RNA-binding</keyword>
<keyword id="KW-0699">rRNA-binding</keyword>
<sequence>MPRVKRGVTARARHQKIFALAKGYRGRRKNVYRVAKQAVMKAGQYAYRDRRQRKRQFRQLWIVRINAGARENGLSYSKFMNGLKRASIEIDRKVLADLAVFDKAAFAQLVEKAKAALAA</sequence>
<comment type="function">
    <text evidence="1">Binds directly to 23S ribosomal RNA and is necessary for the in vitro assembly process of the 50S ribosomal subunit. It is not involved in the protein synthesizing functions of that subunit.</text>
</comment>
<comment type="similarity">
    <text evidence="1">Belongs to the bacterial ribosomal protein bL20 family.</text>
</comment>